<feature type="chain" id="PRO_0000362624" description="NADH-quinone oxidoreductase subunit A">
    <location>
        <begin position="1"/>
        <end position="122"/>
    </location>
</feature>
<feature type="transmembrane region" description="Helical" evidence="1">
    <location>
        <begin position="10"/>
        <end position="30"/>
    </location>
</feature>
<feature type="transmembrane region" description="Helical" evidence="1">
    <location>
        <begin position="66"/>
        <end position="86"/>
    </location>
</feature>
<feature type="transmembrane region" description="Helical" evidence="1">
    <location>
        <begin position="91"/>
        <end position="111"/>
    </location>
</feature>
<proteinExistence type="inferred from homology"/>
<evidence type="ECO:0000255" key="1">
    <source>
        <dbReference type="HAMAP-Rule" id="MF_01394"/>
    </source>
</evidence>
<protein>
    <recommendedName>
        <fullName evidence="1">NADH-quinone oxidoreductase subunit A</fullName>
        <ecNumber evidence="1">7.1.1.-</ecNumber>
    </recommendedName>
    <alternativeName>
        <fullName evidence="1">NADH dehydrogenase I subunit A</fullName>
    </alternativeName>
    <alternativeName>
        <fullName evidence="1">NDH-1 subunit A</fullName>
    </alternativeName>
    <alternativeName>
        <fullName evidence="1">NUO1</fullName>
    </alternativeName>
</protein>
<accession>Q6HAY5</accession>
<organism>
    <name type="scientific">Bacillus thuringiensis subsp. konkukian (strain 97-27)</name>
    <dbReference type="NCBI Taxonomy" id="281309"/>
    <lineage>
        <taxon>Bacteria</taxon>
        <taxon>Bacillati</taxon>
        <taxon>Bacillota</taxon>
        <taxon>Bacilli</taxon>
        <taxon>Bacillales</taxon>
        <taxon>Bacillaceae</taxon>
        <taxon>Bacillus</taxon>
        <taxon>Bacillus cereus group</taxon>
    </lineage>
</organism>
<keyword id="KW-1003">Cell membrane</keyword>
<keyword id="KW-0472">Membrane</keyword>
<keyword id="KW-0520">NAD</keyword>
<keyword id="KW-0874">Quinone</keyword>
<keyword id="KW-1278">Translocase</keyword>
<keyword id="KW-0812">Transmembrane</keyword>
<keyword id="KW-1133">Transmembrane helix</keyword>
<keyword id="KW-0813">Transport</keyword>
<reference key="1">
    <citation type="journal article" date="2006" name="J. Bacteriol.">
        <title>Pathogenomic sequence analysis of Bacillus cereus and Bacillus thuringiensis isolates closely related to Bacillus anthracis.</title>
        <authorList>
            <person name="Han C.S."/>
            <person name="Xie G."/>
            <person name="Challacombe J.F."/>
            <person name="Altherr M.R."/>
            <person name="Bhotika S.S."/>
            <person name="Bruce D."/>
            <person name="Campbell C.S."/>
            <person name="Campbell M.L."/>
            <person name="Chen J."/>
            <person name="Chertkov O."/>
            <person name="Cleland C."/>
            <person name="Dimitrijevic M."/>
            <person name="Doggett N.A."/>
            <person name="Fawcett J.J."/>
            <person name="Glavina T."/>
            <person name="Goodwin L.A."/>
            <person name="Hill K.K."/>
            <person name="Hitchcock P."/>
            <person name="Jackson P.J."/>
            <person name="Keim P."/>
            <person name="Kewalramani A.R."/>
            <person name="Longmire J."/>
            <person name="Lucas S."/>
            <person name="Malfatti S."/>
            <person name="McMurry K."/>
            <person name="Meincke L.J."/>
            <person name="Misra M."/>
            <person name="Moseman B.L."/>
            <person name="Mundt M."/>
            <person name="Munk A.C."/>
            <person name="Okinaka R.T."/>
            <person name="Parson-Quintana B."/>
            <person name="Reilly L.P."/>
            <person name="Richardson P."/>
            <person name="Robinson D.L."/>
            <person name="Rubin E."/>
            <person name="Saunders E."/>
            <person name="Tapia R."/>
            <person name="Tesmer J.G."/>
            <person name="Thayer N."/>
            <person name="Thompson L.S."/>
            <person name="Tice H."/>
            <person name="Ticknor L.O."/>
            <person name="Wills P.L."/>
            <person name="Brettin T.S."/>
            <person name="Gilna P."/>
        </authorList>
    </citation>
    <scope>NUCLEOTIDE SEQUENCE [LARGE SCALE GENOMIC DNA]</scope>
    <source>
        <strain>97-27</strain>
    </source>
</reference>
<gene>
    <name evidence="1" type="primary">nuoA</name>
    <name type="ordered locus">BT9727_4982</name>
</gene>
<name>NUOA_BACHK</name>
<comment type="function">
    <text evidence="1">NDH-1 shuttles electrons from NADH, via FMN and iron-sulfur (Fe-S) centers, to quinones in the respiratory chain. The immediate electron acceptor for the enzyme in this species is believed to be a menaquinone. Couples the redox reaction to proton translocation (for every two electrons transferred, four hydrogen ions are translocated across the cytoplasmic membrane), and thus conserves the redox energy in a proton gradient.</text>
</comment>
<comment type="catalytic activity">
    <reaction evidence="1">
        <text>a quinone + NADH + 5 H(+)(in) = a quinol + NAD(+) + 4 H(+)(out)</text>
        <dbReference type="Rhea" id="RHEA:57888"/>
        <dbReference type="ChEBI" id="CHEBI:15378"/>
        <dbReference type="ChEBI" id="CHEBI:24646"/>
        <dbReference type="ChEBI" id="CHEBI:57540"/>
        <dbReference type="ChEBI" id="CHEBI:57945"/>
        <dbReference type="ChEBI" id="CHEBI:132124"/>
    </reaction>
</comment>
<comment type="subunit">
    <text evidence="1">NDH-1 is composed of 14 different subunits. Subunits NuoA, H, J, K, L, M, N constitute the membrane sector of the complex.</text>
</comment>
<comment type="subcellular location">
    <subcellularLocation>
        <location evidence="1">Cell membrane</location>
        <topology evidence="1">Multi-pass membrane protein</topology>
    </subcellularLocation>
</comment>
<comment type="similarity">
    <text evidence="1">Belongs to the complex I subunit 3 family.</text>
</comment>
<dbReference type="EC" id="7.1.1.-" evidence="1"/>
<dbReference type="EMBL" id="AE017355">
    <property type="protein sequence ID" value="AAT63339.1"/>
    <property type="molecule type" value="Genomic_DNA"/>
</dbReference>
<dbReference type="RefSeq" id="WP_000179272.1">
    <property type="nucleotide sequence ID" value="NC_005957.1"/>
</dbReference>
<dbReference type="RefSeq" id="YP_039291.1">
    <property type="nucleotide sequence ID" value="NC_005957.1"/>
</dbReference>
<dbReference type="SMR" id="Q6HAY5"/>
<dbReference type="KEGG" id="btk:BT9727_4982"/>
<dbReference type="PATRIC" id="fig|281309.8.peg.5299"/>
<dbReference type="HOGENOM" id="CLU_119549_1_1_9"/>
<dbReference type="Proteomes" id="UP000001301">
    <property type="component" value="Chromosome"/>
</dbReference>
<dbReference type="GO" id="GO:0030964">
    <property type="term" value="C:NADH dehydrogenase complex"/>
    <property type="evidence" value="ECO:0007669"/>
    <property type="project" value="TreeGrafter"/>
</dbReference>
<dbReference type="GO" id="GO:0005886">
    <property type="term" value="C:plasma membrane"/>
    <property type="evidence" value="ECO:0007669"/>
    <property type="project" value="UniProtKB-SubCell"/>
</dbReference>
<dbReference type="GO" id="GO:0008137">
    <property type="term" value="F:NADH dehydrogenase (ubiquinone) activity"/>
    <property type="evidence" value="ECO:0007669"/>
    <property type="project" value="InterPro"/>
</dbReference>
<dbReference type="GO" id="GO:0050136">
    <property type="term" value="F:NADH:ubiquinone reductase (non-electrogenic) activity"/>
    <property type="evidence" value="ECO:0007669"/>
    <property type="project" value="UniProtKB-UniRule"/>
</dbReference>
<dbReference type="GO" id="GO:0048038">
    <property type="term" value="F:quinone binding"/>
    <property type="evidence" value="ECO:0007669"/>
    <property type="project" value="UniProtKB-KW"/>
</dbReference>
<dbReference type="FunFam" id="1.20.58.1610:FF:000005">
    <property type="entry name" value="NADH-quinone oxidoreductase subunit A"/>
    <property type="match status" value="1"/>
</dbReference>
<dbReference type="Gene3D" id="1.20.58.1610">
    <property type="entry name" value="NADH:ubiquinone/plastoquinone oxidoreductase, chain 3"/>
    <property type="match status" value="1"/>
</dbReference>
<dbReference type="HAMAP" id="MF_01394">
    <property type="entry name" value="NDH1_NuoA"/>
    <property type="match status" value="1"/>
</dbReference>
<dbReference type="InterPro" id="IPR023043">
    <property type="entry name" value="NAD(P)H_OxRDtase_bac/plastid"/>
</dbReference>
<dbReference type="InterPro" id="IPR000440">
    <property type="entry name" value="NADH_UbQ/plastoQ_OxRdtase_su3"/>
</dbReference>
<dbReference type="InterPro" id="IPR038430">
    <property type="entry name" value="NDAH_ubi_oxred_su3_sf"/>
</dbReference>
<dbReference type="NCBIfam" id="NF005839">
    <property type="entry name" value="PRK07756.1"/>
    <property type="match status" value="1"/>
</dbReference>
<dbReference type="PANTHER" id="PTHR11058">
    <property type="entry name" value="NADH-UBIQUINONE OXIDOREDUCTASE CHAIN 3"/>
    <property type="match status" value="1"/>
</dbReference>
<dbReference type="PANTHER" id="PTHR11058:SF9">
    <property type="entry name" value="NADH-UBIQUINONE OXIDOREDUCTASE CHAIN 3"/>
    <property type="match status" value="1"/>
</dbReference>
<dbReference type="Pfam" id="PF00507">
    <property type="entry name" value="Oxidored_q4"/>
    <property type="match status" value="1"/>
</dbReference>
<sequence>MASVYENSYMIVLIFLLLGILLPVVALTLGRMLRPNKPSAAKATTYESGIEPFHDANIRFHARYYIFALLFVIFDVETLFLYPWAVAYDDLGLFALIEMLIFVVMLLVGLAYAWKKKVLQWL</sequence>